<evidence type="ECO:0000250" key="1"/>
<evidence type="ECO:0000255" key="2"/>
<evidence type="ECO:0000256" key="3">
    <source>
        <dbReference type="SAM" id="MobiDB-lite"/>
    </source>
</evidence>
<evidence type="ECO:0000305" key="4"/>
<evidence type="ECO:0007829" key="5">
    <source>
        <dbReference type="PDB" id="2W2S"/>
    </source>
</evidence>
<organism>
    <name type="scientific">Lagos bat virus</name>
    <name type="common">LBV</name>
    <dbReference type="NCBI Taxonomy" id="38766"/>
    <lineage>
        <taxon>Viruses</taxon>
        <taxon>Riboviria</taxon>
        <taxon>Orthornavirae</taxon>
        <taxon>Negarnaviricota</taxon>
        <taxon>Haploviricotina</taxon>
        <taxon>Monjiviricetes</taxon>
        <taxon>Mononegavirales</taxon>
        <taxon>Rhabdoviridae</taxon>
        <taxon>Alpharhabdovirinae</taxon>
        <taxon>Lyssavirus</taxon>
    </lineage>
</organism>
<dbReference type="EMBL" id="AY540349">
    <property type="protein sequence ID" value="AAT06782.1"/>
    <property type="molecule type" value="mRNA"/>
</dbReference>
<dbReference type="PDB" id="2W2S">
    <property type="method" value="X-ray"/>
    <property type="resolution" value="2.75 A"/>
    <property type="chains" value="A=1-202"/>
</dbReference>
<dbReference type="PDBsum" id="2W2S"/>
<dbReference type="SMR" id="Q6JAM6"/>
<dbReference type="IntAct" id="Q6JAM6">
    <property type="interactions" value="5"/>
</dbReference>
<dbReference type="EvolutionaryTrace" id="Q6JAM6"/>
<dbReference type="GO" id="GO:0033645">
    <property type="term" value="C:host cell endomembrane system"/>
    <property type="evidence" value="ECO:0007669"/>
    <property type="project" value="UniProtKB-SubCell"/>
</dbReference>
<dbReference type="GO" id="GO:0016020">
    <property type="term" value="C:membrane"/>
    <property type="evidence" value="ECO:0007669"/>
    <property type="project" value="UniProtKB-KW"/>
</dbReference>
<dbReference type="GO" id="GO:0019031">
    <property type="term" value="C:viral envelope"/>
    <property type="evidence" value="ECO:0007669"/>
    <property type="project" value="UniProtKB-KW"/>
</dbReference>
<dbReference type="GO" id="GO:0055036">
    <property type="term" value="C:virion membrane"/>
    <property type="evidence" value="ECO:0007669"/>
    <property type="project" value="UniProtKB-SubCell"/>
</dbReference>
<dbReference type="GO" id="GO:0039660">
    <property type="term" value="F:structural constituent of virion"/>
    <property type="evidence" value="ECO:0007669"/>
    <property type="project" value="UniProtKB-KW"/>
</dbReference>
<dbReference type="GO" id="GO:0039702">
    <property type="term" value="P:viral budding via host ESCRT complex"/>
    <property type="evidence" value="ECO:0007669"/>
    <property type="project" value="UniProtKB-KW"/>
</dbReference>
<dbReference type="Gene3D" id="3.10.460.20">
    <property type="entry name" value="Rhabdovirus matrix protein M2"/>
    <property type="match status" value="1"/>
</dbReference>
<dbReference type="InterPro" id="IPR006870">
    <property type="entry name" value="Rhabdo_M"/>
</dbReference>
<dbReference type="InterPro" id="IPR038617">
    <property type="entry name" value="Rhabdovirus_M_sf"/>
</dbReference>
<dbReference type="Pfam" id="PF04785">
    <property type="entry name" value="Rhabdo_M2"/>
    <property type="match status" value="1"/>
</dbReference>
<comment type="function">
    <text evidence="1">Plays a major role in assembly and budding of virion. Completely covers the ribonucleoprotein coil and keep it in condensed bullet-shaped form. Inhibits viral transcription and stimulates replication. Plays a major role in early induction of TRAIL-mediated apoptosis in infected neurons (By similarity).</text>
</comment>
<comment type="subunit">
    <text evidence="1">Homomultimer. Interacts with nucleoprotein and with the cytoplasmic domain of glycoprotein (By similarity).</text>
</comment>
<comment type="subcellular location">
    <subcellularLocation>
        <location>Virion membrane</location>
        <topology>Peripheral membrane protein</topology>
    </subcellularLocation>
    <subcellularLocation>
        <location evidence="1">Host endomembrane system</location>
        <topology evidence="1">Peripheral membrane protein</topology>
    </subcellularLocation>
</comment>
<comment type="domain">
    <text evidence="4">Late-budding domains (L domains) are short sequence motifs essential for viral particle budding. They recruit proteins of the host ESCRT machinery (Endosomal Sorting Complex Required for Transport) or ESCRT-associated proteins. Matrix protein contains one L domain: a PPXY motif which potentially interacts with the WW domain 3 of NEDD4 E3 ubiquitin ligase (Potential).</text>
</comment>
<comment type="miscellaneous">
    <text evidence="1">Most abundant protein in the virion.</text>
</comment>
<comment type="similarity">
    <text evidence="4">Belongs to the lyssavirus matrix protein family.</text>
</comment>
<keyword id="KW-0002">3D-structure</keyword>
<keyword id="KW-0053">Apoptosis</keyword>
<keyword id="KW-1043">Host membrane</keyword>
<keyword id="KW-0945">Host-virus interaction</keyword>
<keyword id="KW-0472">Membrane</keyword>
<keyword id="KW-1198">Viral budding</keyword>
<keyword id="KW-1187">Viral budding via the host ESCRT complexes</keyword>
<keyword id="KW-0261">Viral envelope protein</keyword>
<keyword id="KW-0468">Viral matrix protein</keyword>
<keyword id="KW-1188">Viral release from host cell</keyword>
<keyword id="KW-0946">Virion</keyword>
<reference key="1">
    <citation type="journal article" date="2004" name="J. Virol.">
        <title>Lyssavirus matrix protein induces apoptosis by a TRAIL-dependent mechanism involving caspase-8 activation.</title>
        <authorList>
            <person name="Kassis R."/>
            <person name="Larrous F."/>
            <person name="Estaquier J."/>
            <person name="Bourhy H."/>
        </authorList>
    </citation>
    <scope>NUCLEOTIDE SEQUENCE [MRNA]</scope>
    <source>
        <strain>Nigeria/8619/1958</strain>
    </source>
</reference>
<feature type="chain" id="PRO_0000299104" description="Matrix protein">
    <location>
        <begin position="1"/>
        <end position="202"/>
    </location>
</feature>
<feature type="region of interest" description="Disordered" evidence="3">
    <location>
        <begin position="13"/>
        <end position="32"/>
    </location>
</feature>
<feature type="short sequence motif" description="PPXY motif" evidence="2">
    <location>
        <begin position="35"/>
        <end position="38"/>
    </location>
</feature>
<feature type="strand" evidence="5">
    <location>
        <begin position="49"/>
        <end position="62"/>
    </location>
</feature>
<feature type="helix" evidence="5">
    <location>
        <begin position="69"/>
        <end position="76"/>
    </location>
</feature>
<feature type="helix" evidence="5">
    <location>
        <begin position="77"/>
        <end position="81"/>
    </location>
</feature>
<feature type="helix" evidence="5">
    <location>
        <begin position="87"/>
        <end position="89"/>
    </location>
</feature>
<feature type="helix" evidence="5">
    <location>
        <begin position="90"/>
        <end position="101"/>
    </location>
</feature>
<feature type="strand" evidence="5">
    <location>
        <begin position="106"/>
        <end position="108"/>
    </location>
</feature>
<feature type="strand" evidence="5">
    <location>
        <begin position="111"/>
        <end position="124"/>
    </location>
</feature>
<feature type="strand" evidence="5">
    <location>
        <begin position="136"/>
        <end position="146"/>
    </location>
</feature>
<feature type="strand" evidence="5">
    <location>
        <begin position="149"/>
        <end position="161"/>
    </location>
</feature>
<feature type="helix" evidence="5">
    <location>
        <begin position="175"/>
        <end position="183"/>
    </location>
</feature>
<feature type="strand" evidence="5">
    <location>
        <begin position="188"/>
        <end position="190"/>
    </location>
</feature>
<feature type="strand" evidence="5">
    <location>
        <begin position="198"/>
        <end position="200"/>
    </location>
</feature>
<name>MATRX_LBV</name>
<sequence length="202" mass="23152">MNFLRKIVKNCKDEEIPKPGTPSAPPDDDDLWMPPPEYVPLTQIKGKENVRNFCINGEIKICSPNGYSFRILRHILKSFDNVYSGNRRLIGVVKVVIGLVLSASPVPEGMNWVYKLRRTLIFQWAESHGPLEGEELEYSQEITWDDEAEFVSLQIRVSAKQCHIQGRLWCINMNSKACQLWADMGLKTQQSQEDENTSLLLE</sequence>
<accession>Q6JAM6</accession>
<organismHost>
    <name type="scientific">Homo sapiens</name>
    <name type="common">Human</name>
    <dbReference type="NCBI Taxonomy" id="9606"/>
</organismHost>
<organismHost>
    <name type="scientific">Mammalia</name>
    <dbReference type="NCBI Taxonomy" id="40674"/>
</organismHost>
<gene>
    <name type="primary">M</name>
</gene>
<protein>
    <recommendedName>
        <fullName>Matrix protein</fullName>
    </recommendedName>
</protein>
<proteinExistence type="evidence at protein level"/>